<sequence>GLLGVLGSVAKHVLPHVVPVIAEHL</sequence>
<accession>P56227</accession>
<keyword id="KW-0027">Amidation</keyword>
<keyword id="KW-0878">Amphibian defense peptide</keyword>
<keyword id="KW-0044">Antibiotic</keyword>
<keyword id="KW-0929">Antimicrobial</keyword>
<keyword id="KW-0903">Direct protein sequencing</keyword>
<keyword id="KW-0964">Secreted</keyword>
<dbReference type="GO" id="GO:0005576">
    <property type="term" value="C:extracellular region"/>
    <property type="evidence" value="ECO:0007669"/>
    <property type="project" value="UniProtKB-SubCell"/>
</dbReference>
<dbReference type="GO" id="GO:0042742">
    <property type="term" value="P:defense response to bacterium"/>
    <property type="evidence" value="ECO:0007669"/>
    <property type="project" value="UniProtKB-KW"/>
</dbReference>
<dbReference type="InterPro" id="IPR010000">
    <property type="entry name" value="Caerin_1"/>
</dbReference>
<dbReference type="Pfam" id="PF07440">
    <property type="entry name" value="Caerin_1"/>
    <property type="match status" value="1"/>
</dbReference>
<reference key="1">
    <citation type="journal article" date="1993" name="J. Chem. Res.">
        <title>Peptides from Australian frogs. The structures of the caerins from Litoria caerula.</title>
        <authorList>
            <person name="Stone D.J.M."/>
            <person name="Waugh R.J."/>
            <person name="Bowie J.H."/>
            <person name="Wallace J.C."/>
            <person name="Tyler M.J."/>
        </authorList>
    </citation>
    <scope>PROTEIN SEQUENCE</scope>
    <scope>MASS SPECTROMETRY</scope>
    <source>
        <tissue>Parotoid gland</tissue>
    </source>
</reference>
<evidence type="ECO:0000250" key="1"/>
<evidence type="ECO:0000250" key="2">
    <source>
        <dbReference type="UniProtKB" id="Q800R2"/>
    </source>
</evidence>
<evidence type="ECO:0000269" key="3">
    <source ref="1"/>
</evidence>
<evidence type="ECO:0000305" key="4"/>
<protein>
    <recommendedName>
        <fullName>Caerin-1.2</fullName>
    </recommendedName>
</protein>
<feature type="peptide" id="PRO_0000043736" description="Caerin-1.2">
    <location>
        <begin position="1"/>
        <end position="25"/>
    </location>
</feature>
<feature type="modified residue" description="Leucine amide" evidence="2">
    <location>
        <position position="25"/>
    </location>
</feature>
<name>CR12_RANCA</name>
<comment type="function">
    <text>Antibacterial peptide, that adopts an alpha helical conformation which can disrupt bacterial membranes. Each caerin displays a different antimicrobial specificity.</text>
</comment>
<comment type="subcellular location">
    <subcellularLocation>
        <location>Secreted</location>
    </subcellularLocation>
</comment>
<comment type="tissue specificity">
    <text>Expressed by the skin parotoid and/or rostral glands.</text>
</comment>
<comment type="domain">
    <text evidence="1">Contains two amphipathic alpha helix regions separated by a region of less-defined helicity and greater flexibility.</text>
</comment>
<comment type="mass spectrometry"/>
<comment type="similarity">
    <text evidence="4">Belongs to the frog skin active peptide (FSAP) family. Caerin subfamily.</text>
</comment>
<organism>
    <name type="scientific">Ranoidea caerulea</name>
    <name type="common">Green tree frog</name>
    <name type="synonym">Litoria caerulea</name>
    <dbReference type="NCBI Taxonomy" id="30344"/>
    <lineage>
        <taxon>Eukaryota</taxon>
        <taxon>Metazoa</taxon>
        <taxon>Chordata</taxon>
        <taxon>Craniata</taxon>
        <taxon>Vertebrata</taxon>
        <taxon>Euteleostomi</taxon>
        <taxon>Amphibia</taxon>
        <taxon>Batrachia</taxon>
        <taxon>Anura</taxon>
        <taxon>Neobatrachia</taxon>
        <taxon>Hyloidea</taxon>
        <taxon>Hylidae</taxon>
        <taxon>Pelodryadinae</taxon>
        <taxon>Ranoidea</taxon>
    </lineage>
</organism>
<proteinExistence type="evidence at protein level"/>